<organism>
    <name type="scientific">Legionella pneumophila (strain Paris)</name>
    <dbReference type="NCBI Taxonomy" id="297246"/>
    <lineage>
        <taxon>Bacteria</taxon>
        <taxon>Pseudomonadati</taxon>
        <taxon>Pseudomonadota</taxon>
        <taxon>Gammaproteobacteria</taxon>
        <taxon>Legionellales</taxon>
        <taxon>Legionellaceae</taxon>
        <taxon>Legionella</taxon>
    </lineage>
</organism>
<keyword id="KW-0028">Amino-acid biosynthesis</keyword>
<keyword id="KW-0057">Aromatic amino acid biosynthesis</keyword>
<keyword id="KW-0170">Cobalt</keyword>
<keyword id="KW-0963">Cytoplasm</keyword>
<keyword id="KW-0456">Lyase</keyword>
<keyword id="KW-0479">Metal-binding</keyword>
<keyword id="KW-0520">NAD</keyword>
<keyword id="KW-0547">Nucleotide-binding</keyword>
<keyword id="KW-0862">Zinc</keyword>
<protein>
    <recommendedName>
        <fullName evidence="1">3-dehydroquinate synthase</fullName>
        <shortName evidence="1">DHQS</shortName>
        <ecNumber evidence="1">4.2.3.4</ecNumber>
    </recommendedName>
</protein>
<dbReference type="EC" id="4.2.3.4" evidence="1"/>
<dbReference type="EMBL" id="CR628336">
    <property type="protein sequence ID" value="CAH12146.1"/>
    <property type="molecule type" value="Genomic_DNA"/>
</dbReference>
<dbReference type="RefSeq" id="WP_011213358.1">
    <property type="nucleotide sequence ID" value="NC_006368.1"/>
</dbReference>
<dbReference type="SMR" id="Q5X6H0"/>
<dbReference type="KEGG" id="lpp:lpp0995"/>
<dbReference type="LegioList" id="lpp0995"/>
<dbReference type="HOGENOM" id="CLU_001201_0_2_6"/>
<dbReference type="UniPathway" id="UPA00053">
    <property type="reaction ID" value="UER00085"/>
</dbReference>
<dbReference type="GO" id="GO:0005737">
    <property type="term" value="C:cytoplasm"/>
    <property type="evidence" value="ECO:0007669"/>
    <property type="project" value="UniProtKB-SubCell"/>
</dbReference>
<dbReference type="GO" id="GO:0003856">
    <property type="term" value="F:3-dehydroquinate synthase activity"/>
    <property type="evidence" value="ECO:0007669"/>
    <property type="project" value="UniProtKB-UniRule"/>
</dbReference>
<dbReference type="GO" id="GO:0046872">
    <property type="term" value="F:metal ion binding"/>
    <property type="evidence" value="ECO:0007669"/>
    <property type="project" value="UniProtKB-KW"/>
</dbReference>
<dbReference type="GO" id="GO:0000166">
    <property type="term" value="F:nucleotide binding"/>
    <property type="evidence" value="ECO:0007669"/>
    <property type="project" value="UniProtKB-KW"/>
</dbReference>
<dbReference type="GO" id="GO:0008652">
    <property type="term" value="P:amino acid biosynthetic process"/>
    <property type="evidence" value="ECO:0007669"/>
    <property type="project" value="UniProtKB-KW"/>
</dbReference>
<dbReference type="GO" id="GO:0009073">
    <property type="term" value="P:aromatic amino acid family biosynthetic process"/>
    <property type="evidence" value="ECO:0007669"/>
    <property type="project" value="UniProtKB-KW"/>
</dbReference>
<dbReference type="GO" id="GO:0009423">
    <property type="term" value="P:chorismate biosynthetic process"/>
    <property type="evidence" value="ECO:0007669"/>
    <property type="project" value="UniProtKB-UniRule"/>
</dbReference>
<dbReference type="CDD" id="cd08195">
    <property type="entry name" value="DHQS"/>
    <property type="match status" value="1"/>
</dbReference>
<dbReference type="FunFam" id="3.40.50.1970:FF:000001">
    <property type="entry name" value="3-dehydroquinate synthase"/>
    <property type="match status" value="1"/>
</dbReference>
<dbReference type="Gene3D" id="3.40.50.1970">
    <property type="match status" value="1"/>
</dbReference>
<dbReference type="Gene3D" id="1.20.1090.10">
    <property type="entry name" value="Dehydroquinate synthase-like - alpha domain"/>
    <property type="match status" value="1"/>
</dbReference>
<dbReference type="HAMAP" id="MF_00110">
    <property type="entry name" value="DHQ_synthase"/>
    <property type="match status" value="1"/>
</dbReference>
<dbReference type="InterPro" id="IPR050071">
    <property type="entry name" value="Dehydroquinate_synthase"/>
</dbReference>
<dbReference type="InterPro" id="IPR016037">
    <property type="entry name" value="DHQ_synth_AroB"/>
</dbReference>
<dbReference type="InterPro" id="IPR030963">
    <property type="entry name" value="DHQ_synth_fam"/>
</dbReference>
<dbReference type="InterPro" id="IPR030960">
    <property type="entry name" value="DHQS/DOIS_N"/>
</dbReference>
<dbReference type="InterPro" id="IPR056179">
    <property type="entry name" value="DHQS_C"/>
</dbReference>
<dbReference type="NCBIfam" id="TIGR01357">
    <property type="entry name" value="aroB"/>
    <property type="match status" value="1"/>
</dbReference>
<dbReference type="PANTHER" id="PTHR43622">
    <property type="entry name" value="3-DEHYDROQUINATE SYNTHASE"/>
    <property type="match status" value="1"/>
</dbReference>
<dbReference type="PANTHER" id="PTHR43622:SF7">
    <property type="entry name" value="3-DEHYDROQUINATE SYNTHASE, CHLOROPLASTIC"/>
    <property type="match status" value="1"/>
</dbReference>
<dbReference type="Pfam" id="PF01761">
    <property type="entry name" value="DHQ_synthase"/>
    <property type="match status" value="1"/>
</dbReference>
<dbReference type="Pfam" id="PF24621">
    <property type="entry name" value="DHQS_C"/>
    <property type="match status" value="1"/>
</dbReference>
<dbReference type="PIRSF" id="PIRSF001455">
    <property type="entry name" value="DHQ_synth"/>
    <property type="match status" value="1"/>
</dbReference>
<dbReference type="SUPFAM" id="SSF56796">
    <property type="entry name" value="Dehydroquinate synthase-like"/>
    <property type="match status" value="1"/>
</dbReference>
<gene>
    <name evidence="1" type="primary">aroB</name>
    <name type="ordered locus">lpp0995</name>
</gene>
<sequence>MAKFELYAEVDVSISGHQYPIIICRNGLIDPDLINRFITSKQVLIVTNRTVAPLYLGHLQSVLPSKQCDVVILEDGEEHKNQRSLFTIYDSLIQNKHHRDTSIIALGGGVIGDMAGFAASTYQRGVRFIQLPTTLLAQVDASVGGKTAINHPAGKNMIGSFYQPQAVIIDLNTLKTLPEREFRAGIAEMIKYALLVGGSFFERIQEVLQQGLTVHSPELPLLIAECCQVKAKIVEQDERESGLRALLNLGHTFAHALETYTDYKKWLHGEAVAIGLYCAAVLSEKKGLLDKPIVDQVEKMLIHAGLPHKIPNSIDLIQLRELMSLDKKIKNNCLRFVMIKKPGACYIDDSVTEDCLHNTLINVVEGEQK</sequence>
<name>AROB_LEGPA</name>
<evidence type="ECO:0000255" key="1">
    <source>
        <dbReference type="HAMAP-Rule" id="MF_00110"/>
    </source>
</evidence>
<reference key="1">
    <citation type="journal article" date="2004" name="Nat. Genet.">
        <title>Evidence in the Legionella pneumophila genome for exploitation of host cell functions and high genome plasticity.</title>
        <authorList>
            <person name="Cazalet C."/>
            <person name="Rusniok C."/>
            <person name="Brueggemann H."/>
            <person name="Zidane N."/>
            <person name="Magnier A."/>
            <person name="Ma L."/>
            <person name="Tichit M."/>
            <person name="Jarraud S."/>
            <person name="Bouchier C."/>
            <person name="Vandenesch F."/>
            <person name="Kunst F."/>
            <person name="Etienne J."/>
            <person name="Glaser P."/>
            <person name="Buchrieser C."/>
        </authorList>
    </citation>
    <scope>NUCLEOTIDE SEQUENCE [LARGE SCALE GENOMIC DNA]</scope>
    <source>
        <strain>Paris</strain>
    </source>
</reference>
<proteinExistence type="inferred from homology"/>
<accession>Q5X6H0</accession>
<comment type="function">
    <text evidence="1">Catalyzes the conversion of 3-deoxy-D-arabino-heptulosonate 7-phosphate (DAHP) to dehydroquinate (DHQ).</text>
</comment>
<comment type="catalytic activity">
    <reaction evidence="1">
        <text>7-phospho-2-dehydro-3-deoxy-D-arabino-heptonate = 3-dehydroquinate + phosphate</text>
        <dbReference type="Rhea" id="RHEA:21968"/>
        <dbReference type="ChEBI" id="CHEBI:32364"/>
        <dbReference type="ChEBI" id="CHEBI:43474"/>
        <dbReference type="ChEBI" id="CHEBI:58394"/>
        <dbReference type="EC" id="4.2.3.4"/>
    </reaction>
</comment>
<comment type="cofactor">
    <cofactor evidence="1">
        <name>Co(2+)</name>
        <dbReference type="ChEBI" id="CHEBI:48828"/>
    </cofactor>
    <cofactor evidence="1">
        <name>Zn(2+)</name>
        <dbReference type="ChEBI" id="CHEBI:29105"/>
    </cofactor>
    <text evidence="1">Binds 1 divalent metal cation per subunit. Can use either Co(2+) or Zn(2+).</text>
</comment>
<comment type="cofactor">
    <cofactor evidence="1">
        <name>NAD(+)</name>
        <dbReference type="ChEBI" id="CHEBI:57540"/>
    </cofactor>
</comment>
<comment type="pathway">
    <text evidence="1">Metabolic intermediate biosynthesis; chorismate biosynthesis; chorismate from D-erythrose 4-phosphate and phosphoenolpyruvate: step 2/7.</text>
</comment>
<comment type="subcellular location">
    <subcellularLocation>
        <location evidence="1">Cytoplasm</location>
    </subcellularLocation>
</comment>
<comment type="similarity">
    <text evidence="1">Belongs to the sugar phosphate cyclases superfamily. Dehydroquinate synthase family.</text>
</comment>
<feature type="chain" id="PRO_0000231095" description="3-dehydroquinate synthase">
    <location>
        <begin position="1"/>
        <end position="369"/>
    </location>
</feature>
<feature type="binding site" evidence="1">
    <location>
        <begin position="75"/>
        <end position="80"/>
    </location>
    <ligand>
        <name>NAD(+)</name>
        <dbReference type="ChEBI" id="CHEBI:57540"/>
    </ligand>
</feature>
<feature type="binding site" evidence="1">
    <location>
        <begin position="109"/>
        <end position="113"/>
    </location>
    <ligand>
        <name>NAD(+)</name>
        <dbReference type="ChEBI" id="CHEBI:57540"/>
    </ligand>
</feature>
<feature type="binding site" evidence="1">
    <location>
        <begin position="133"/>
        <end position="134"/>
    </location>
    <ligand>
        <name>NAD(+)</name>
        <dbReference type="ChEBI" id="CHEBI:57540"/>
    </ligand>
</feature>
<feature type="binding site" evidence="1">
    <location>
        <position position="146"/>
    </location>
    <ligand>
        <name>NAD(+)</name>
        <dbReference type="ChEBI" id="CHEBI:57540"/>
    </ligand>
</feature>
<feature type="binding site" evidence="1">
    <location>
        <position position="155"/>
    </location>
    <ligand>
        <name>NAD(+)</name>
        <dbReference type="ChEBI" id="CHEBI:57540"/>
    </ligand>
</feature>
<feature type="binding site" evidence="1">
    <location>
        <begin position="173"/>
        <end position="176"/>
    </location>
    <ligand>
        <name>NAD(+)</name>
        <dbReference type="ChEBI" id="CHEBI:57540"/>
    </ligand>
</feature>
<feature type="binding site" evidence="1">
    <location>
        <position position="188"/>
    </location>
    <ligand>
        <name>Zn(2+)</name>
        <dbReference type="ChEBI" id="CHEBI:29105"/>
    </ligand>
</feature>
<feature type="binding site" evidence="1">
    <location>
        <position position="251"/>
    </location>
    <ligand>
        <name>Zn(2+)</name>
        <dbReference type="ChEBI" id="CHEBI:29105"/>
    </ligand>
</feature>
<feature type="binding site" evidence="1">
    <location>
        <position position="268"/>
    </location>
    <ligand>
        <name>Zn(2+)</name>
        <dbReference type="ChEBI" id="CHEBI:29105"/>
    </ligand>
</feature>